<comment type="function">
    <text evidence="1">Part of the twin-arginine translocation (Tat) system that transports large folded proteins containing a characteristic twin-arginine motif in their signal peptide across membranes. Together with TatC, TatB is part of a receptor directly interacting with Tat signal peptides. TatB may form an oligomeric binding site that transiently accommodates folded Tat precursor proteins before their translocation.</text>
</comment>
<comment type="subunit">
    <text evidence="1">The Tat system comprises two distinct complexes: a TatABC complex, containing multiple copies of TatA, TatB and TatC subunits, and a separate TatA complex, containing only TatA subunits. Substrates initially bind to the TatABC complex, which probably triggers association of the separate TatA complex to form the active translocon.</text>
</comment>
<comment type="subcellular location">
    <subcellularLocation>
        <location evidence="1">Cell inner membrane</location>
        <topology evidence="1">Single-pass membrane protein</topology>
    </subcellularLocation>
</comment>
<comment type="similarity">
    <text evidence="1">Belongs to the TatB family.</text>
</comment>
<feature type="chain" id="PRO_0000301212" description="Sec-independent protein translocase protein TatB">
    <location>
        <begin position="1"/>
        <end position="158"/>
    </location>
</feature>
<feature type="transmembrane region" description="Helical" evidence="1">
    <location>
        <begin position="1"/>
        <end position="21"/>
    </location>
</feature>
<feature type="region of interest" description="Disordered" evidence="2">
    <location>
        <begin position="73"/>
        <end position="158"/>
    </location>
</feature>
<feature type="compositionally biased region" description="Low complexity" evidence="2">
    <location>
        <begin position="80"/>
        <end position="90"/>
    </location>
</feature>
<accession>Q4ZZG9</accession>
<proteinExistence type="inferred from homology"/>
<sequence length="158" mass="16764">MFGISFSELLLVGLVALLVLGPERLPGAARTAGLWIGRLKRSFNAIKQEVEREIGADEIRRQLHNEHILSMEDEARKMFAPNQPSENSPEPANPPPAPAAAEAASPVHNQAAHHEIGPAQPAAPKTELSLEKTAKPADAGTPVPAPPAHDSSLPPRAP</sequence>
<evidence type="ECO:0000255" key="1">
    <source>
        <dbReference type="HAMAP-Rule" id="MF_00237"/>
    </source>
</evidence>
<evidence type="ECO:0000256" key="2">
    <source>
        <dbReference type="SAM" id="MobiDB-lite"/>
    </source>
</evidence>
<name>TATB_PSEU2</name>
<gene>
    <name evidence="1" type="primary">tatB</name>
    <name type="ordered locus">Psyr_0383</name>
</gene>
<keyword id="KW-0997">Cell inner membrane</keyword>
<keyword id="KW-1003">Cell membrane</keyword>
<keyword id="KW-0472">Membrane</keyword>
<keyword id="KW-0653">Protein transport</keyword>
<keyword id="KW-0811">Translocation</keyword>
<keyword id="KW-0812">Transmembrane</keyword>
<keyword id="KW-1133">Transmembrane helix</keyword>
<keyword id="KW-0813">Transport</keyword>
<dbReference type="EMBL" id="CP000075">
    <property type="protein sequence ID" value="AAY35453.1"/>
    <property type="molecule type" value="Genomic_DNA"/>
</dbReference>
<dbReference type="RefSeq" id="WP_011266365.1">
    <property type="nucleotide sequence ID" value="NC_007005.1"/>
</dbReference>
<dbReference type="RefSeq" id="YP_233491.1">
    <property type="nucleotide sequence ID" value="NC_007005.1"/>
</dbReference>
<dbReference type="SMR" id="Q4ZZG9"/>
<dbReference type="STRING" id="205918.Psyr_0383"/>
<dbReference type="KEGG" id="psb:Psyr_0383"/>
<dbReference type="PATRIC" id="fig|205918.7.peg.396"/>
<dbReference type="eggNOG" id="COG1826">
    <property type="taxonomic scope" value="Bacteria"/>
</dbReference>
<dbReference type="HOGENOM" id="CLU_086034_1_1_6"/>
<dbReference type="OrthoDB" id="9816005at2"/>
<dbReference type="Proteomes" id="UP000000426">
    <property type="component" value="Chromosome"/>
</dbReference>
<dbReference type="GO" id="GO:0033281">
    <property type="term" value="C:TAT protein transport complex"/>
    <property type="evidence" value="ECO:0007669"/>
    <property type="project" value="UniProtKB-UniRule"/>
</dbReference>
<dbReference type="GO" id="GO:0008320">
    <property type="term" value="F:protein transmembrane transporter activity"/>
    <property type="evidence" value="ECO:0007669"/>
    <property type="project" value="UniProtKB-UniRule"/>
</dbReference>
<dbReference type="GO" id="GO:0043953">
    <property type="term" value="P:protein transport by the Tat complex"/>
    <property type="evidence" value="ECO:0007669"/>
    <property type="project" value="UniProtKB-UniRule"/>
</dbReference>
<dbReference type="Gene3D" id="1.20.5.3310">
    <property type="match status" value="1"/>
</dbReference>
<dbReference type="HAMAP" id="MF_00237">
    <property type="entry name" value="TatB"/>
    <property type="match status" value="1"/>
</dbReference>
<dbReference type="InterPro" id="IPR003369">
    <property type="entry name" value="TatA/B/E"/>
</dbReference>
<dbReference type="InterPro" id="IPR018448">
    <property type="entry name" value="TatB"/>
</dbReference>
<dbReference type="NCBIfam" id="TIGR01410">
    <property type="entry name" value="tatB"/>
    <property type="match status" value="1"/>
</dbReference>
<dbReference type="PANTHER" id="PTHR33162">
    <property type="entry name" value="SEC-INDEPENDENT PROTEIN TRANSLOCASE PROTEIN TATA, CHLOROPLASTIC"/>
    <property type="match status" value="1"/>
</dbReference>
<dbReference type="PANTHER" id="PTHR33162:SF1">
    <property type="entry name" value="SEC-INDEPENDENT PROTEIN TRANSLOCASE PROTEIN TATA, CHLOROPLASTIC"/>
    <property type="match status" value="1"/>
</dbReference>
<dbReference type="Pfam" id="PF02416">
    <property type="entry name" value="TatA_B_E"/>
    <property type="match status" value="1"/>
</dbReference>
<dbReference type="PRINTS" id="PR01506">
    <property type="entry name" value="TATBPROTEIN"/>
</dbReference>
<organism>
    <name type="scientific">Pseudomonas syringae pv. syringae (strain B728a)</name>
    <dbReference type="NCBI Taxonomy" id="205918"/>
    <lineage>
        <taxon>Bacteria</taxon>
        <taxon>Pseudomonadati</taxon>
        <taxon>Pseudomonadota</taxon>
        <taxon>Gammaproteobacteria</taxon>
        <taxon>Pseudomonadales</taxon>
        <taxon>Pseudomonadaceae</taxon>
        <taxon>Pseudomonas</taxon>
        <taxon>Pseudomonas syringae</taxon>
    </lineage>
</organism>
<reference key="1">
    <citation type="journal article" date="2005" name="Proc. Natl. Acad. Sci. U.S.A.">
        <title>Comparison of the complete genome sequences of Pseudomonas syringae pv. syringae B728a and pv. tomato DC3000.</title>
        <authorList>
            <person name="Feil H."/>
            <person name="Feil W.S."/>
            <person name="Chain P."/>
            <person name="Larimer F."/>
            <person name="Dibartolo G."/>
            <person name="Copeland A."/>
            <person name="Lykidis A."/>
            <person name="Trong S."/>
            <person name="Nolan M."/>
            <person name="Goltsman E."/>
            <person name="Thiel J."/>
            <person name="Malfatti S."/>
            <person name="Loper J.E."/>
            <person name="Lapidus A."/>
            <person name="Detter J.C."/>
            <person name="Land M."/>
            <person name="Richardson P.M."/>
            <person name="Kyrpides N.C."/>
            <person name="Ivanova N."/>
            <person name="Lindow S.E."/>
        </authorList>
    </citation>
    <scope>NUCLEOTIDE SEQUENCE [LARGE SCALE GENOMIC DNA]</scope>
    <source>
        <strain>B728a</strain>
    </source>
</reference>
<protein>
    <recommendedName>
        <fullName evidence="1">Sec-independent protein translocase protein TatB</fullName>
    </recommendedName>
</protein>